<sequence length="416" mass="46522">MNEPEGLRFRRLNRPQIITDELQEPQYKGTSTYSGKVFRVILVTLGGCLILPLLVVFFLLESPIHPELLSLSEPPLMSGCYEPNFKLREAQRLFEDQLVGPESIANFGDLIYTGTADGKIVKIEGKSITVIARLGKPPCDGSREQEPSCGRPLGIRVGPNGTLFVADAYLGLFKVNPVTGEVTNLVSAGQMVGGRRLSFVNDLDVTQDGRKVYFTDSSSRWQRRDYLHLIMEATADGRVLEYDTETKEVTVLMENLRFANGIQLFPDEESVLVAETTMARIRRVHVSGLNKGGMDTFVDNLPGFPDNIRRSSSGGYWVAMSAVRPNPGFSMLDFLSQKPWIKKLIFKLFSQDVLMKFVPRYSLVIELQESGACMRSFHDPHGMVAAYVSEAHEHDGHLYLGSFRSPYLCKLDLSKV</sequence>
<accession>B5X3B2</accession>
<proteinExistence type="evidence at transcript level"/>
<protein>
    <recommendedName>
        <fullName>Adipocyte plasma membrane-associated protein</fullName>
    </recommendedName>
</protein>
<evidence type="ECO:0000250" key="1"/>
<evidence type="ECO:0000255" key="2"/>
<evidence type="ECO:0000305" key="3"/>
<organism>
    <name type="scientific">Salmo salar</name>
    <name type="common">Atlantic salmon</name>
    <dbReference type="NCBI Taxonomy" id="8030"/>
    <lineage>
        <taxon>Eukaryota</taxon>
        <taxon>Metazoa</taxon>
        <taxon>Chordata</taxon>
        <taxon>Craniata</taxon>
        <taxon>Vertebrata</taxon>
        <taxon>Euteleostomi</taxon>
        <taxon>Actinopterygii</taxon>
        <taxon>Neopterygii</taxon>
        <taxon>Teleostei</taxon>
        <taxon>Protacanthopterygii</taxon>
        <taxon>Salmoniformes</taxon>
        <taxon>Salmonidae</taxon>
        <taxon>Salmoninae</taxon>
        <taxon>Salmo</taxon>
    </lineage>
</organism>
<reference key="1">
    <citation type="journal article" date="2010" name="BMC Genomics">
        <title>Salmo salar and Esox lucius full-length cDNA sequences reveal changes in evolutionary pressures on a post-tetraploidization genome.</title>
        <authorList>
            <person name="Leong J.S."/>
            <person name="Jantzen S.G."/>
            <person name="von Schalburg K.R."/>
            <person name="Cooper G.A."/>
            <person name="Messmer A.M."/>
            <person name="Liao N.Y."/>
            <person name="Munro S."/>
            <person name="Moore R."/>
            <person name="Holt R.A."/>
            <person name="Jones S.J."/>
            <person name="Davidson W.S."/>
            <person name="Koop B.F."/>
        </authorList>
    </citation>
    <scope>NUCLEOTIDE SEQUENCE [LARGE SCALE MRNA]</scope>
    <source>
        <tissue>Brain</tissue>
    </source>
</reference>
<keyword id="KW-0325">Glycoprotein</keyword>
<keyword id="KW-0472">Membrane</keyword>
<keyword id="KW-1185">Reference proteome</keyword>
<keyword id="KW-0735">Signal-anchor</keyword>
<keyword id="KW-0812">Transmembrane</keyword>
<keyword id="KW-1133">Transmembrane helix</keyword>
<gene>
    <name type="primary">apmap</name>
</gene>
<dbReference type="EMBL" id="BT045531">
    <property type="protein sequence ID" value="ACI33793.1"/>
    <property type="molecule type" value="mRNA"/>
</dbReference>
<dbReference type="RefSeq" id="NP_001133727.1">
    <property type="nucleotide sequence ID" value="NM_001140255.1"/>
</dbReference>
<dbReference type="SMR" id="B5X3B2"/>
<dbReference type="STRING" id="8030.ENSSSAP00000069321"/>
<dbReference type="GlyCosmos" id="B5X3B2">
    <property type="glycosylation" value="1 site, No reported glycans"/>
</dbReference>
<dbReference type="PaxDb" id="8030-ENSSSAP00000069321"/>
<dbReference type="Ensembl" id="ENSSSAT00020102030">
    <property type="protein sequence ID" value="ENSSSAP00020073765"/>
    <property type="gene ID" value="ENSSSAG00020048528"/>
</dbReference>
<dbReference type="Ensembl" id="ENSSSAT00070015980">
    <property type="protein sequence ID" value="ENSSSAP00070015185"/>
    <property type="gene ID" value="ENSSSAG00070010159"/>
</dbReference>
<dbReference type="Ensembl" id="ENSSSAT00075034470">
    <property type="protein sequence ID" value="ENSSSAP00075023903"/>
    <property type="gene ID" value="ENSSSAG00075016701"/>
</dbReference>
<dbReference type="GeneID" id="100195226"/>
<dbReference type="KEGG" id="sasa:100195226"/>
<dbReference type="OrthoDB" id="485509at7898"/>
<dbReference type="Proteomes" id="UP000087266">
    <property type="component" value="Chromosome ssa01"/>
</dbReference>
<dbReference type="Bgee" id="ENSSSAG00000062463">
    <property type="expression patterns" value="Expressed in pituitary gland and 24 other cell types or tissues"/>
</dbReference>
<dbReference type="GO" id="GO:0012505">
    <property type="term" value="C:endomembrane system"/>
    <property type="evidence" value="ECO:0007669"/>
    <property type="project" value="TreeGrafter"/>
</dbReference>
<dbReference type="GO" id="GO:0016020">
    <property type="term" value="C:membrane"/>
    <property type="evidence" value="ECO:0007669"/>
    <property type="project" value="UniProtKB-SubCell"/>
</dbReference>
<dbReference type="GO" id="GO:0004064">
    <property type="term" value="F:arylesterase activity"/>
    <property type="evidence" value="ECO:0007669"/>
    <property type="project" value="TreeGrafter"/>
</dbReference>
<dbReference type="FunFam" id="2.120.10.30:FF:000041">
    <property type="entry name" value="adipocyte plasma membrane-associated protein"/>
    <property type="match status" value="1"/>
</dbReference>
<dbReference type="Gene3D" id="2.120.10.30">
    <property type="entry name" value="TolB, C-terminal domain"/>
    <property type="match status" value="1"/>
</dbReference>
<dbReference type="InterPro" id="IPR011042">
    <property type="entry name" value="6-blade_b-propeller_TolB-like"/>
</dbReference>
<dbReference type="InterPro" id="IPR018119">
    <property type="entry name" value="Strictosidine_synth_cons-reg"/>
</dbReference>
<dbReference type="PANTHER" id="PTHR10426:SF130">
    <property type="entry name" value="ADIPOCYTE PLASMA MEMBRANE-ASSOCIATED PROTEIN"/>
    <property type="match status" value="1"/>
</dbReference>
<dbReference type="PANTHER" id="PTHR10426">
    <property type="entry name" value="STRICTOSIDINE SYNTHASE-RELATED"/>
    <property type="match status" value="1"/>
</dbReference>
<dbReference type="Pfam" id="PF20067">
    <property type="entry name" value="SSL_N"/>
    <property type="match status" value="1"/>
</dbReference>
<dbReference type="Pfam" id="PF03088">
    <property type="entry name" value="Str_synth"/>
    <property type="match status" value="1"/>
</dbReference>
<dbReference type="SUPFAM" id="SSF63829">
    <property type="entry name" value="Calcium-dependent phosphotriesterase"/>
    <property type="match status" value="1"/>
</dbReference>
<name>APMAP_SALSA</name>
<comment type="subcellular location">
    <subcellularLocation>
        <location evidence="1">Membrane</location>
        <topology evidence="1">Single-pass type II membrane protein</topology>
    </subcellularLocation>
</comment>
<comment type="similarity">
    <text evidence="3">Belongs to the strictosidine synthase family.</text>
</comment>
<feature type="chain" id="PRO_0000370861" description="Adipocyte plasma membrane-associated protein">
    <location>
        <begin position="1"/>
        <end position="416"/>
    </location>
</feature>
<feature type="topological domain" description="Cytoplasmic" evidence="2">
    <location>
        <begin position="1"/>
        <end position="39"/>
    </location>
</feature>
<feature type="transmembrane region" description="Helical" evidence="2">
    <location>
        <begin position="40"/>
        <end position="60"/>
    </location>
</feature>
<feature type="topological domain" description="Extracellular" evidence="2">
    <location>
        <begin position="61"/>
        <end position="412"/>
    </location>
</feature>
<feature type="glycosylation site" description="N-linked (GlcNAc...) asparagine" evidence="2">
    <location>
        <position position="160"/>
    </location>
</feature>